<gene>
    <name evidence="1" type="primary">aroB</name>
    <name type="ordered locus">CF0290</name>
</gene>
<proteinExistence type="inferred from homology"/>
<evidence type="ECO:0000250" key="1">
    <source>
        <dbReference type="UniProtKB" id="P07639"/>
    </source>
</evidence>
<evidence type="ECO:0000250" key="2">
    <source>
        <dbReference type="UniProtKB" id="P9WPX9"/>
    </source>
</evidence>
<evidence type="ECO:0000250" key="3">
    <source>
        <dbReference type="UniProtKB" id="Q6GGU4"/>
    </source>
</evidence>
<evidence type="ECO:0000305" key="4"/>
<protein>
    <recommendedName>
        <fullName evidence="1">3-dehydroquinate synthase</fullName>
        <shortName evidence="1">DHQS</shortName>
        <ecNumber evidence="1">4.2.3.4</ecNumber>
    </recommendedName>
</protein>
<name>AROB_CHLFF</name>
<keyword id="KW-0028">Amino-acid biosynthesis</keyword>
<keyword id="KW-0057">Aromatic amino acid biosynthesis</keyword>
<keyword id="KW-0170">Cobalt</keyword>
<keyword id="KW-0963">Cytoplasm</keyword>
<keyword id="KW-0456">Lyase</keyword>
<keyword id="KW-0479">Metal-binding</keyword>
<keyword id="KW-0520">NAD</keyword>
<keyword id="KW-0547">Nucleotide-binding</keyword>
<keyword id="KW-0862">Zinc</keyword>
<dbReference type="EC" id="4.2.3.4" evidence="1"/>
<dbReference type="EMBL" id="AP006861">
    <property type="protein sequence ID" value="BAE81062.1"/>
    <property type="molecule type" value="Genomic_DNA"/>
</dbReference>
<dbReference type="RefSeq" id="WP_011457843.1">
    <property type="nucleotide sequence ID" value="NC_007899.1"/>
</dbReference>
<dbReference type="SMR" id="Q255H6"/>
<dbReference type="STRING" id="264202.CF0290"/>
<dbReference type="KEGG" id="cfe:CF0290"/>
<dbReference type="eggNOG" id="COG0337">
    <property type="taxonomic scope" value="Bacteria"/>
</dbReference>
<dbReference type="HOGENOM" id="CLU_001201_0_1_0"/>
<dbReference type="OrthoDB" id="9806583at2"/>
<dbReference type="UniPathway" id="UPA00053">
    <property type="reaction ID" value="UER00085"/>
</dbReference>
<dbReference type="Proteomes" id="UP000001260">
    <property type="component" value="Chromosome"/>
</dbReference>
<dbReference type="GO" id="GO:0005737">
    <property type="term" value="C:cytoplasm"/>
    <property type="evidence" value="ECO:0007669"/>
    <property type="project" value="UniProtKB-SubCell"/>
</dbReference>
<dbReference type="GO" id="GO:0003856">
    <property type="term" value="F:3-dehydroquinate synthase activity"/>
    <property type="evidence" value="ECO:0007669"/>
    <property type="project" value="UniProtKB-EC"/>
</dbReference>
<dbReference type="GO" id="GO:0046872">
    <property type="term" value="F:metal ion binding"/>
    <property type="evidence" value="ECO:0007669"/>
    <property type="project" value="UniProtKB-KW"/>
</dbReference>
<dbReference type="GO" id="GO:0000166">
    <property type="term" value="F:nucleotide binding"/>
    <property type="evidence" value="ECO:0007669"/>
    <property type="project" value="UniProtKB-KW"/>
</dbReference>
<dbReference type="GO" id="GO:0008652">
    <property type="term" value="P:amino acid biosynthetic process"/>
    <property type="evidence" value="ECO:0007669"/>
    <property type="project" value="UniProtKB-KW"/>
</dbReference>
<dbReference type="GO" id="GO:0009073">
    <property type="term" value="P:aromatic amino acid family biosynthetic process"/>
    <property type="evidence" value="ECO:0007669"/>
    <property type="project" value="UniProtKB-KW"/>
</dbReference>
<dbReference type="GO" id="GO:0009423">
    <property type="term" value="P:chorismate biosynthetic process"/>
    <property type="evidence" value="ECO:0007669"/>
    <property type="project" value="UniProtKB-UniPathway"/>
</dbReference>
<dbReference type="CDD" id="cd08195">
    <property type="entry name" value="DHQS"/>
    <property type="match status" value="1"/>
</dbReference>
<dbReference type="FunFam" id="3.40.50.1970:FF:000007">
    <property type="entry name" value="Pentafunctional AROM polypeptide"/>
    <property type="match status" value="1"/>
</dbReference>
<dbReference type="Gene3D" id="3.40.50.1970">
    <property type="match status" value="1"/>
</dbReference>
<dbReference type="Gene3D" id="1.20.1090.10">
    <property type="entry name" value="Dehydroquinate synthase-like - alpha domain"/>
    <property type="match status" value="1"/>
</dbReference>
<dbReference type="InterPro" id="IPR050071">
    <property type="entry name" value="Dehydroquinate_synthase"/>
</dbReference>
<dbReference type="InterPro" id="IPR016037">
    <property type="entry name" value="DHQ_synth_AroB"/>
</dbReference>
<dbReference type="InterPro" id="IPR030963">
    <property type="entry name" value="DHQ_synth_fam"/>
</dbReference>
<dbReference type="InterPro" id="IPR030960">
    <property type="entry name" value="DHQS/DOIS_N"/>
</dbReference>
<dbReference type="InterPro" id="IPR056179">
    <property type="entry name" value="DHQS_C"/>
</dbReference>
<dbReference type="NCBIfam" id="TIGR01357">
    <property type="entry name" value="aroB"/>
    <property type="match status" value="1"/>
</dbReference>
<dbReference type="PANTHER" id="PTHR43622">
    <property type="entry name" value="3-DEHYDROQUINATE SYNTHASE"/>
    <property type="match status" value="1"/>
</dbReference>
<dbReference type="PANTHER" id="PTHR43622:SF7">
    <property type="entry name" value="3-DEHYDROQUINATE SYNTHASE, CHLOROPLASTIC"/>
    <property type="match status" value="1"/>
</dbReference>
<dbReference type="Pfam" id="PF01761">
    <property type="entry name" value="DHQ_synthase"/>
    <property type="match status" value="1"/>
</dbReference>
<dbReference type="Pfam" id="PF24621">
    <property type="entry name" value="DHQS_C"/>
    <property type="match status" value="1"/>
</dbReference>
<dbReference type="PIRSF" id="PIRSF001455">
    <property type="entry name" value="DHQ_synth"/>
    <property type="match status" value="1"/>
</dbReference>
<dbReference type="SUPFAM" id="SSF56796">
    <property type="entry name" value="Dehydroquinate synthase-like"/>
    <property type="match status" value="1"/>
</dbReference>
<sequence length="379" mass="42360">MIEHFISDPHNVKFVESIFNKKLFSSISTDYPLVIISDSHVAEKILPPVLGFIDSLGYRVILLTFPPGEKNKTWEIFISLQNQLVDHGVSLGATIMGIGGGIVLDMAGFLASTYCRGIQLFLIPTTMTAMIDASIGGKNGINLRGLKNRLGTFYPPKDVWVCPEFLTTLSKQEWCYGISESIKHGCVADAYIWEFLHSYGDTLFSSRTILNEFIKRNCQIKAVIAAKDPKDKNLRKILNFGHTIAHALETLSEGHIPHGLAVSVGMMIEIKISLESGIMKNPSLVEQLYNLSNNFNLPTTLEELRDLIPQHFLHRFYHPENIITTLGYDKKNLSNKALRMVMIEHLGRVAPCSGSYCATPKMGILYEVLKSECDAVRNN</sequence>
<accession>Q255H6</accession>
<feature type="chain" id="PRO_1000094485" description="3-dehydroquinate synthase">
    <location>
        <begin position="1"/>
        <end position="379"/>
    </location>
</feature>
<feature type="binding site" evidence="2">
    <location>
        <begin position="67"/>
        <end position="72"/>
    </location>
    <ligand>
        <name>NAD(+)</name>
        <dbReference type="ChEBI" id="CHEBI:57540"/>
    </ligand>
</feature>
<feature type="binding site" evidence="2">
    <location>
        <begin position="101"/>
        <end position="105"/>
    </location>
    <ligand>
        <name>NAD(+)</name>
        <dbReference type="ChEBI" id="CHEBI:57540"/>
    </ligand>
</feature>
<feature type="binding site" evidence="2">
    <location>
        <begin position="125"/>
        <end position="126"/>
    </location>
    <ligand>
        <name>NAD(+)</name>
        <dbReference type="ChEBI" id="CHEBI:57540"/>
    </ligand>
</feature>
<feature type="binding site" evidence="2">
    <location>
        <position position="138"/>
    </location>
    <ligand>
        <name>NAD(+)</name>
        <dbReference type="ChEBI" id="CHEBI:57540"/>
    </ligand>
</feature>
<feature type="binding site" evidence="3">
    <location>
        <position position="147"/>
    </location>
    <ligand>
        <name>NAD(+)</name>
        <dbReference type="ChEBI" id="CHEBI:57540"/>
    </ligand>
</feature>
<feature type="binding site" evidence="2">
    <location>
        <position position="180"/>
    </location>
    <ligand>
        <name>Zn(2+)</name>
        <dbReference type="ChEBI" id="CHEBI:29105"/>
    </ligand>
</feature>
<feature type="binding site" evidence="2">
    <location>
        <position position="242"/>
    </location>
    <ligand>
        <name>Zn(2+)</name>
        <dbReference type="ChEBI" id="CHEBI:29105"/>
    </ligand>
</feature>
<feature type="binding site" evidence="2">
    <location>
        <position position="258"/>
    </location>
    <ligand>
        <name>Zn(2+)</name>
        <dbReference type="ChEBI" id="CHEBI:29105"/>
    </ligand>
</feature>
<organism>
    <name type="scientific">Chlamydia felis (strain Fe/C-56)</name>
    <name type="common">Chlamydophila felis</name>
    <dbReference type="NCBI Taxonomy" id="264202"/>
    <lineage>
        <taxon>Bacteria</taxon>
        <taxon>Pseudomonadati</taxon>
        <taxon>Chlamydiota</taxon>
        <taxon>Chlamydiia</taxon>
        <taxon>Chlamydiales</taxon>
        <taxon>Chlamydiaceae</taxon>
        <taxon>Chlamydia/Chlamydophila group</taxon>
        <taxon>Chlamydia</taxon>
    </lineage>
</organism>
<comment type="function">
    <text evidence="1">Catalyzes the conversion of 3-deoxy-D-arabino-heptulosonate 7-phosphate (DAHP) to dehydroquinate (DHQ).</text>
</comment>
<comment type="catalytic activity">
    <reaction evidence="1">
        <text>7-phospho-2-dehydro-3-deoxy-D-arabino-heptonate = 3-dehydroquinate + phosphate</text>
        <dbReference type="Rhea" id="RHEA:21968"/>
        <dbReference type="ChEBI" id="CHEBI:32364"/>
        <dbReference type="ChEBI" id="CHEBI:43474"/>
        <dbReference type="ChEBI" id="CHEBI:58394"/>
        <dbReference type="EC" id="4.2.3.4"/>
    </reaction>
</comment>
<comment type="cofactor">
    <cofactor evidence="1">
        <name>NAD(+)</name>
        <dbReference type="ChEBI" id="CHEBI:57540"/>
    </cofactor>
</comment>
<comment type="cofactor">
    <cofactor evidence="1">
        <name>Co(2+)</name>
        <dbReference type="ChEBI" id="CHEBI:48828"/>
    </cofactor>
    <cofactor evidence="1">
        <name>Zn(2+)</name>
        <dbReference type="ChEBI" id="CHEBI:29105"/>
    </cofactor>
    <text evidence="1">Binds 1 divalent metal cation per subunit. Can use either Co(2+) or Zn(2+).</text>
</comment>
<comment type="pathway">
    <text evidence="1">Metabolic intermediate biosynthesis; chorismate biosynthesis; chorismate from D-erythrose 4-phosphate and phosphoenolpyruvate: step 2/7.</text>
</comment>
<comment type="subcellular location">
    <subcellularLocation>
        <location evidence="1">Cytoplasm</location>
    </subcellularLocation>
</comment>
<comment type="similarity">
    <text evidence="4">Belongs to the sugar phosphate cyclases superfamily. Dehydroquinate synthase family.</text>
</comment>
<reference key="1">
    <citation type="journal article" date="2006" name="DNA Res.">
        <title>Genome sequence of the cat pathogen, Chlamydophila felis.</title>
        <authorList>
            <person name="Azuma Y."/>
            <person name="Hirakawa H."/>
            <person name="Yamashita A."/>
            <person name="Cai Y."/>
            <person name="Rahman M.A."/>
            <person name="Suzuki H."/>
            <person name="Mitaku S."/>
            <person name="Toh H."/>
            <person name="Goto S."/>
            <person name="Murakami T."/>
            <person name="Sugi K."/>
            <person name="Hayashi H."/>
            <person name="Fukushi H."/>
            <person name="Hattori M."/>
            <person name="Kuhara S."/>
            <person name="Shirai M."/>
        </authorList>
    </citation>
    <scope>NUCLEOTIDE SEQUENCE [LARGE SCALE GENOMIC DNA]</scope>
    <source>
        <strain>Fe/C-56</strain>
    </source>
</reference>